<name>OTC_LEPIC</name>
<accession>Q72T26</accession>
<organism>
    <name type="scientific">Leptospira interrogans serogroup Icterohaemorrhagiae serovar copenhageni (strain Fiocruz L1-130)</name>
    <dbReference type="NCBI Taxonomy" id="267671"/>
    <lineage>
        <taxon>Bacteria</taxon>
        <taxon>Pseudomonadati</taxon>
        <taxon>Spirochaetota</taxon>
        <taxon>Spirochaetia</taxon>
        <taxon>Leptospirales</taxon>
        <taxon>Leptospiraceae</taxon>
        <taxon>Leptospira</taxon>
    </lineage>
</organism>
<sequence length="311" mass="35416">MSESNVKHLISWEDWSDSEILDLLDFAIHVKKNRVNYAGHMSGRSLAMLFQKTSTRTRVSFEVAMTEMGGHGIYLDWMASNFQLSDIDLEARYLSRNVSVIMARLKKHEDLLTMRNGSQVPLINGCDNMFHPCQSLADIMTIALDKPEIPLNQIQLTYIGVHNNVVNSLIGITSALGIRLTLVTPIAEKENIHSQTVERAKAKGTLSWEENLKKAIQNADYVYTDTWLDMEFFNDPSYADKKKQRMELMMPYQINSSLLEKTNAKVMHDMPIHAGYEITREVVLGPRSIIFQQAENRLDAQKAVILKLLEA</sequence>
<dbReference type="EC" id="2.1.3.3"/>
<dbReference type="EMBL" id="AE016823">
    <property type="protein sequence ID" value="AAS69802.1"/>
    <property type="molecule type" value="Genomic_DNA"/>
</dbReference>
<dbReference type="RefSeq" id="WP_000004530.1">
    <property type="nucleotide sequence ID" value="NC_005823.1"/>
</dbReference>
<dbReference type="SMR" id="Q72T26"/>
<dbReference type="KEGG" id="lic:LIC_11195"/>
<dbReference type="HOGENOM" id="CLU_043846_3_2_12"/>
<dbReference type="UniPathway" id="UPA00068">
    <property type="reaction ID" value="UER00112"/>
</dbReference>
<dbReference type="Proteomes" id="UP000007037">
    <property type="component" value="Chromosome I"/>
</dbReference>
<dbReference type="GO" id="GO:0005737">
    <property type="term" value="C:cytoplasm"/>
    <property type="evidence" value="ECO:0007669"/>
    <property type="project" value="UniProtKB-SubCell"/>
</dbReference>
<dbReference type="GO" id="GO:0016597">
    <property type="term" value="F:amino acid binding"/>
    <property type="evidence" value="ECO:0007669"/>
    <property type="project" value="InterPro"/>
</dbReference>
<dbReference type="GO" id="GO:0004585">
    <property type="term" value="F:ornithine carbamoyltransferase activity"/>
    <property type="evidence" value="ECO:0007669"/>
    <property type="project" value="UniProtKB-EC"/>
</dbReference>
<dbReference type="GO" id="GO:0042450">
    <property type="term" value="P:arginine biosynthetic process via ornithine"/>
    <property type="evidence" value="ECO:0007669"/>
    <property type="project" value="TreeGrafter"/>
</dbReference>
<dbReference type="GO" id="GO:0019240">
    <property type="term" value="P:citrulline biosynthetic process"/>
    <property type="evidence" value="ECO:0007669"/>
    <property type="project" value="TreeGrafter"/>
</dbReference>
<dbReference type="GO" id="GO:0006526">
    <property type="term" value="P:L-arginine biosynthetic process"/>
    <property type="evidence" value="ECO:0007669"/>
    <property type="project" value="UniProtKB-UniPathway"/>
</dbReference>
<dbReference type="FunFam" id="3.40.50.1370:FF:000026">
    <property type="entry name" value="Ornithine carbamoyltransferase"/>
    <property type="match status" value="1"/>
</dbReference>
<dbReference type="Gene3D" id="3.40.50.1370">
    <property type="entry name" value="Aspartate/ornithine carbamoyltransferase"/>
    <property type="match status" value="2"/>
</dbReference>
<dbReference type="InterPro" id="IPR006132">
    <property type="entry name" value="Asp/Orn_carbamoyltranf_P-bd"/>
</dbReference>
<dbReference type="InterPro" id="IPR006130">
    <property type="entry name" value="Asp/Orn_carbamoylTrfase"/>
</dbReference>
<dbReference type="InterPro" id="IPR036901">
    <property type="entry name" value="Asp/Orn_carbamoylTrfase_sf"/>
</dbReference>
<dbReference type="InterPro" id="IPR006131">
    <property type="entry name" value="Asp_carbamoyltransf_Asp/Orn-bd"/>
</dbReference>
<dbReference type="InterPro" id="IPR002292">
    <property type="entry name" value="Orn/put_carbamltrans"/>
</dbReference>
<dbReference type="NCBIfam" id="NF011379">
    <property type="entry name" value="PRK14804.1"/>
    <property type="match status" value="1"/>
</dbReference>
<dbReference type="PANTHER" id="PTHR45753">
    <property type="entry name" value="ORNITHINE CARBAMOYLTRANSFERASE, MITOCHONDRIAL"/>
    <property type="match status" value="1"/>
</dbReference>
<dbReference type="PANTHER" id="PTHR45753:SF3">
    <property type="entry name" value="ORNITHINE TRANSCARBAMYLASE, MITOCHONDRIAL"/>
    <property type="match status" value="1"/>
</dbReference>
<dbReference type="Pfam" id="PF00185">
    <property type="entry name" value="OTCace"/>
    <property type="match status" value="1"/>
</dbReference>
<dbReference type="Pfam" id="PF02729">
    <property type="entry name" value="OTCace_N"/>
    <property type="match status" value="1"/>
</dbReference>
<dbReference type="PRINTS" id="PR00100">
    <property type="entry name" value="AOTCASE"/>
</dbReference>
<dbReference type="PRINTS" id="PR00102">
    <property type="entry name" value="OTCASE"/>
</dbReference>
<dbReference type="SUPFAM" id="SSF53671">
    <property type="entry name" value="Aspartate/ornithine carbamoyltransferase"/>
    <property type="match status" value="1"/>
</dbReference>
<dbReference type="PROSITE" id="PS00097">
    <property type="entry name" value="CARBAMOYLTRANSFERASE"/>
    <property type="match status" value="1"/>
</dbReference>
<comment type="function">
    <text evidence="1">Reversibly catalyzes the transfer of the carbamoyl group from carbamoyl phosphate (CP) to the N(epsilon) atom of ornithine (ORN) to produce L-citrulline.</text>
</comment>
<comment type="catalytic activity">
    <reaction>
        <text>carbamoyl phosphate + L-ornithine = L-citrulline + phosphate + H(+)</text>
        <dbReference type="Rhea" id="RHEA:19513"/>
        <dbReference type="ChEBI" id="CHEBI:15378"/>
        <dbReference type="ChEBI" id="CHEBI:43474"/>
        <dbReference type="ChEBI" id="CHEBI:46911"/>
        <dbReference type="ChEBI" id="CHEBI:57743"/>
        <dbReference type="ChEBI" id="CHEBI:58228"/>
        <dbReference type="EC" id="2.1.3.3"/>
    </reaction>
</comment>
<comment type="pathway">
    <text>Amino-acid biosynthesis; L-arginine biosynthesis; L-arginine from L-ornithine and carbamoyl phosphate: step 1/3.</text>
</comment>
<comment type="subcellular location">
    <subcellularLocation>
        <location evidence="1">Cytoplasm</location>
    </subcellularLocation>
</comment>
<comment type="similarity">
    <text evidence="2">Belongs to the aspartate/ornithine carbamoyltransferase superfamily. OTCase family.</text>
</comment>
<comment type="caution">
    <text evidence="2">Lacks the conserved cysteine and leucine residues in positions 269 and 270, respectively, which are part of the ornithine binding site; they are replaced by an aspartate and a methionine residue, respectively.</text>
</comment>
<reference key="1">
    <citation type="journal article" date="2004" name="J. Bacteriol.">
        <title>Comparative genomics of two Leptospira interrogans serovars reveals novel insights into physiology and pathogenesis.</title>
        <authorList>
            <person name="Nascimento A.L.T.O."/>
            <person name="Ko A.I."/>
            <person name="Martins E.A.L."/>
            <person name="Monteiro-Vitorello C.B."/>
            <person name="Ho P.L."/>
            <person name="Haake D.A."/>
            <person name="Verjovski-Almeida S."/>
            <person name="Hartskeerl R.A."/>
            <person name="Marques M.V."/>
            <person name="Oliveira M.C."/>
            <person name="Menck C.F.M."/>
            <person name="Leite L.C.C."/>
            <person name="Carrer H."/>
            <person name="Coutinho L.L."/>
            <person name="Degrave W.M."/>
            <person name="Dellagostin O.A."/>
            <person name="El-Dorry H."/>
            <person name="Ferro E.S."/>
            <person name="Ferro M.I.T."/>
            <person name="Furlan L.R."/>
            <person name="Gamberini M."/>
            <person name="Giglioti E.A."/>
            <person name="Goes-Neto A."/>
            <person name="Goldman G.H."/>
            <person name="Goldman M.H.S."/>
            <person name="Harakava R."/>
            <person name="Jeronimo S.M.B."/>
            <person name="Junqueira-de-Azevedo I.L.M."/>
            <person name="Kimura E.T."/>
            <person name="Kuramae E.E."/>
            <person name="Lemos E.G.M."/>
            <person name="Lemos M.V.F."/>
            <person name="Marino C.L."/>
            <person name="Nunes L.R."/>
            <person name="de Oliveira R.C."/>
            <person name="Pereira G.G."/>
            <person name="Reis M.S."/>
            <person name="Schriefer A."/>
            <person name="Siqueira W.J."/>
            <person name="Sommer P."/>
            <person name="Tsai S.M."/>
            <person name="Simpson A.J.G."/>
            <person name="Ferro J.A."/>
            <person name="Camargo L.E.A."/>
            <person name="Kitajima J.P."/>
            <person name="Setubal J.C."/>
            <person name="Van Sluys M.A."/>
        </authorList>
    </citation>
    <scope>NUCLEOTIDE SEQUENCE [LARGE SCALE GENOMIC DNA]</scope>
    <source>
        <strain>Fiocruz L1-130</strain>
    </source>
</reference>
<proteinExistence type="inferred from homology"/>
<protein>
    <recommendedName>
        <fullName>Ornithine carbamoyltransferase</fullName>
        <shortName>OTCase</shortName>
        <ecNumber>2.1.3.3</ecNumber>
    </recommendedName>
</protein>
<keyword id="KW-0028">Amino-acid biosynthesis</keyword>
<keyword id="KW-0055">Arginine biosynthesis</keyword>
<keyword id="KW-0963">Cytoplasm</keyword>
<keyword id="KW-0808">Transferase</keyword>
<gene>
    <name type="primary">argF</name>
    <name type="ordered locus">LIC_11195</name>
</gene>
<feature type="chain" id="PRO_0000112940" description="Ornithine carbamoyltransferase">
    <location>
        <begin position="1"/>
        <end position="311"/>
    </location>
</feature>
<feature type="binding site" evidence="1">
    <location>
        <begin position="54"/>
        <end position="58"/>
    </location>
    <ligand>
        <name>carbamoyl phosphate</name>
        <dbReference type="ChEBI" id="CHEBI:58228"/>
    </ligand>
</feature>
<feature type="binding site" evidence="1">
    <location>
        <position position="81"/>
    </location>
    <ligand>
        <name>carbamoyl phosphate</name>
        <dbReference type="ChEBI" id="CHEBI:58228"/>
    </ligand>
</feature>
<feature type="binding site" evidence="1">
    <location>
        <position position="104"/>
    </location>
    <ligand>
        <name>carbamoyl phosphate</name>
        <dbReference type="ChEBI" id="CHEBI:58228"/>
    </ligand>
</feature>
<feature type="binding site" evidence="1">
    <location>
        <begin position="131"/>
        <end position="134"/>
    </location>
    <ligand>
        <name>carbamoyl phosphate</name>
        <dbReference type="ChEBI" id="CHEBI:58228"/>
    </ligand>
</feature>
<feature type="binding site" evidence="1">
    <location>
        <position position="164"/>
    </location>
    <ligand>
        <name>L-ornithine</name>
        <dbReference type="ChEBI" id="CHEBI:46911"/>
    </ligand>
</feature>
<feature type="binding site" evidence="1">
    <location>
        <position position="225"/>
    </location>
    <ligand>
        <name>L-ornithine</name>
        <dbReference type="ChEBI" id="CHEBI:46911"/>
    </ligand>
</feature>
<feature type="binding site" evidence="1">
    <location>
        <begin position="229"/>
        <end position="230"/>
    </location>
    <ligand>
        <name>L-ornithine</name>
        <dbReference type="ChEBI" id="CHEBI:46911"/>
    </ligand>
</feature>
<feature type="binding site" evidence="1">
    <location>
        <begin position="268"/>
        <end position="271"/>
    </location>
    <ligand>
        <name>carbamoyl phosphate</name>
        <dbReference type="ChEBI" id="CHEBI:58228"/>
    </ligand>
</feature>
<feature type="binding site" evidence="1">
    <location>
        <position position="279"/>
    </location>
    <ligand>
        <name>carbamoyl phosphate</name>
        <dbReference type="ChEBI" id="CHEBI:58228"/>
    </ligand>
</feature>
<feature type="binding site" evidence="1">
    <location>
        <position position="297"/>
    </location>
    <ligand>
        <name>carbamoyl phosphate</name>
        <dbReference type="ChEBI" id="CHEBI:58228"/>
    </ligand>
</feature>
<feature type="site" description="Important for structural integrity" evidence="1">
    <location>
        <position position="31"/>
    </location>
</feature>
<evidence type="ECO:0000250" key="1"/>
<evidence type="ECO:0000305" key="2"/>